<feature type="chain" id="PRO_0000360592" description="SPbeta prophage-derived uncharacterized protein YomH">
    <location>
        <begin position="1"/>
        <end position="252"/>
    </location>
</feature>
<sequence>MIRESQYFMFNNIPSYELGAVNVNTEGGLLEESFIANRTVNETYTRLSSEPYVDNVKLEPYEIPLNFYIENHLDEKNVRRVARWLNVDDYKPLSFSRNLDIIYFALPINATDLVHNCSNDGYVKLTMKVFPYKYGQETTTHWFDVTSGVKNIEIENIGDVDIPLSLEFKKIGDGDITVENLTLYRTPLKFTGIKHHEVINVDSNKKLITSSISGYECYDQVNEEYVILTRGKNRIKINGECYIRLKYRYKYL</sequence>
<accession>O31977</accession>
<proteinExistence type="predicted"/>
<reference key="1">
    <citation type="journal article" date="1997" name="Nature">
        <title>The complete genome sequence of the Gram-positive bacterium Bacillus subtilis.</title>
        <authorList>
            <person name="Kunst F."/>
            <person name="Ogasawara N."/>
            <person name="Moszer I."/>
            <person name="Albertini A.M."/>
            <person name="Alloni G."/>
            <person name="Azevedo V."/>
            <person name="Bertero M.G."/>
            <person name="Bessieres P."/>
            <person name="Bolotin A."/>
            <person name="Borchert S."/>
            <person name="Borriss R."/>
            <person name="Boursier L."/>
            <person name="Brans A."/>
            <person name="Braun M."/>
            <person name="Brignell S.C."/>
            <person name="Bron S."/>
            <person name="Brouillet S."/>
            <person name="Bruschi C.V."/>
            <person name="Caldwell B."/>
            <person name="Capuano V."/>
            <person name="Carter N.M."/>
            <person name="Choi S.-K."/>
            <person name="Codani J.-J."/>
            <person name="Connerton I.F."/>
            <person name="Cummings N.J."/>
            <person name="Daniel R.A."/>
            <person name="Denizot F."/>
            <person name="Devine K.M."/>
            <person name="Duesterhoeft A."/>
            <person name="Ehrlich S.D."/>
            <person name="Emmerson P.T."/>
            <person name="Entian K.-D."/>
            <person name="Errington J."/>
            <person name="Fabret C."/>
            <person name="Ferrari E."/>
            <person name="Foulger D."/>
            <person name="Fritz C."/>
            <person name="Fujita M."/>
            <person name="Fujita Y."/>
            <person name="Fuma S."/>
            <person name="Galizzi A."/>
            <person name="Galleron N."/>
            <person name="Ghim S.-Y."/>
            <person name="Glaser P."/>
            <person name="Goffeau A."/>
            <person name="Golightly E.J."/>
            <person name="Grandi G."/>
            <person name="Guiseppi G."/>
            <person name="Guy B.J."/>
            <person name="Haga K."/>
            <person name="Haiech J."/>
            <person name="Harwood C.R."/>
            <person name="Henaut A."/>
            <person name="Hilbert H."/>
            <person name="Holsappel S."/>
            <person name="Hosono S."/>
            <person name="Hullo M.-F."/>
            <person name="Itaya M."/>
            <person name="Jones L.-M."/>
            <person name="Joris B."/>
            <person name="Karamata D."/>
            <person name="Kasahara Y."/>
            <person name="Klaerr-Blanchard M."/>
            <person name="Klein C."/>
            <person name="Kobayashi Y."/>
            <person name="Koetter P."/>
            <person name="Koningstein G."/>
            <person name="Krogh S."/>
            <person name="Kumano M."/>
            <person name="Kurita K."/>
            <person name="Lapidus A."/>
            <person name="Lardinois S."/>
            <person name="Lauber J."/>
            <person name="Lazarevic V."/>
            <person name="Lee S.-M."/>
            <person name="Levine A."/>
            <person name="Liu H."/>
            <person name="Masuda S."/>
            <person name="Mauel C."/>
            <person name="Medigue C."/>
            <person name="Medina N."/>
            <person name="Mellado R.P."/>
            <person name="Mizuno M."/>
            <person name="Moestl D."/>
            <person name="Nakai S."/>
            <person name="Noback M."/>
            <person name="Noone D."/>
            <person name="O'Reilly M."/>
            <person name="Ogawa K."/>
            <person name="Ogiwara A."/>
            <person name="Oudega B."/>
            <person name="Park S.-H."/>
            <person name="Parro V."/>
            <person name="Pohl T.M."/>
            <person name="Portetelle D."/>
            <person name="Porwollik S."/>
            <person name="Prescott A.M."/>
            <person name="Presecan E."/>
            <person name="Pujic P."/>
            <person name="Purnelle B."/>
            <person name="Rapoport G."/>
            <person name="Rey M."/>
            <person name="Reynolds S."/>
            <person name="Rieger M."/>
            <person name="Rivolta C."/>
            <person name="Rocha E."/>
            <person name="Roche B."/>
            <person name="Rose M."/>
            <person name="Sadaie Y."/>
            <person name="Sato T."/>
            <person name="Scanlan E."/>
            <person name="Schleich S."/>
            <person name="Schroeter R."/>
            <person name="Scoffone F."/>
            <person name="Sekiguchi J."/>
            <person name="Sekowska A."/>
            <person name="Seror S.J."/>
            <person name="Serror P."/>
            <person name="Shin B.-S."/>
            <person name="Soldo B."/>
            <person name="Sorokin A."/>
            <person name="Tacconi E."/>
            <person name="Takagi T."/>
            <person name="Takahashi H."/>
            <person name="Takemaru K."/>
            <person name="Takeuchi M."/>
            <person name="Tamakoshi A."/>
            <person name="Tanaka T."/>
            <person name="Terpstra P."/>
            <person name="Tognoni A."/>
            <person name="Tosato V."/>
            <person name="Uchiyama S."/>
            <person name="Vandenbol M."/>
            <person name="Vannier F."/>
            <person name="Vassarotti A."/>
            <person name="Viari A."/>
            <person name="Wambutt R."/>
            <person name="Wedler E."/>
            <person name="Wedler H."/>
            <person name="Weitzenegger T."/>
            <person name="Winters P."/>
            <person name="Wipat A."/>
            <person name="Yamamoto H."/>
            <person name="Yamane K."/>
            <person name="Yasumoto K."/>
            <person name="Yata K."/>
            <person name="Yoshida K."/>
            <person name="Yoshikawa H.-F."/>
            <person name="Zumstein E."/>
            <person name="Yoshikawa H."/>
            <person name="Danchin A."/>
        </authorList>
    </citation>
    <scope>NUCLEOTIDE SEQUENCE [LARGE SCALE GENOMIC DNA]</scope>
    <source>
        <strain>168</strain>
    </source>
</reference>
<dbReference type="EMBL" id="AL009126">
    <property type="protein sequence ID" value="CAB14054.1"/>
    <property type="molecule type" value="Genomic_DNA"/>
</dbReference>
<dbReference type="RefSeq" id="NP_390019.1">
    <property type="nucleotide sequence ID" value="NC_000964.3"/>
</dbReference>
<dbReference type="RefSeq" id="WP_004398627.1">
    <property type="nucleotide sequence ID" value="NZ_OZ025638.1"/>
</dbReference>
<dbReference type="SMR" id="O31977"/>
<dbReference type="FunCoup" id="O31977">
    <property type="interactions" value="133"/>
</dbReference>
<dbReference type="STRING" id="224308.BSU21360"/>
<dbReference type="PaxDb" id="224308-BSU21360"/>
<dbReference type="EnsemblBacteria" id="CAB14054">
    <property type="protein sequence ID" value="CAB14054"/>
    <property type="gene ID" value="BSU_21360"/>
</dbReference>
<dbReference type="GeneID" id="939139"/>
<dbReference type="KEGG" id="bsu:BSU21360"/>
<dbReference type="PATRIC" id="fig|224308.179.peg.2332"/>
<dbReference type="eggNOG" id="ENOG5033P3R">
    <property type="taxonomic scope" value="Bacteria"/>
</dbReference>
<dbReference type="InParanoid" id="O31977"/>
<dbReference type="OrthoDB" id="2731856at2"/>
<dbReference type="BioCyc" id="BSUB:BSU21360-MONOMER"/>
<dbReference type="Proteomes" id="UP000001570">
    <property type="component" value="Chromosome"/>
</dbReference>
<dbReference type="Gene3D" id="2.40.30.200">
    <property type="match status" value="1"/>
</dbReference>
<dbReference type="InterPro" id="IPR048276">
    <property type="entry name" value="Phage_tail-like_C"/>
</dbReference>
<dbReference type="Pfam" id="PF20753">
    <property type="entry name" value="DUF6558_C"/>
    <property type="match status" value="1"/>
</dbReference>
<protein>
    <recommendedName>
        <fullName>SPbeta prophage-derived uncharacterized protein YomH</fullName>
    </recommendedName>
</protein>
<organism>
    <name type="scientific">Bacillus subtilis (strain 168)</name>
    <dbReference type="NCBI Taxonomy" id="224308"/>
    <lineage>
        <taxon>Bacteria</taxon>
        <taxon>Bacillati</taxon>
        <taxon>Bacillota</taxon>
        <taxon>Bacilli</taxon>
        <taxon>Bacillales</taxon>
        <taxon>Bacillaceae</taxon>
        <taxon>Bacillus</taxon>
    </lineage>
</organism>
<keyword id="KW-1185">Reference proteome</keyword>
<gene>
    <name type="primary">yomH</name>
    <name type="ordered locus">BSU21360</name>
</gene>
<name>YOMH_BACSU</name>